<evidence type="ECO:0000255" key="1">
    <source>
        <dbReference type="HAMAP-Rule" id="MF_00109"/>
    </source>
</evidence>
<feature type="chain" id="PRO_0000237847" description="Shikimate kinase">
    <location>
        <begin position="1"/>
        <end position="185"/>
    </location>
</feature>
<feature type="binding site" evidence="1">
    <location>
        <begin position="15"/>
        <end position="20"/>
    </location>
    <ligand>
        <name>ATP</name>
        <dbReference type="ChEBI" id="CHEBI:30616"/>
    </ligand>
</feature>
<feature type="binding site" evidence="1">
    <location>
        <position position="19"/>
    </location>
    <ligand>
        <name>Mg(2+)</name>
        <dbReference type="ChEBI" id="CHEBI:18420"/>
    </ligand>
</feature>
<feature type="binding site" evidence="1">
    <location>
        <position position="37"/>
    </location>
    <ligand>
        <name>substrate</name>
    </ligand>
</feature>
<feature type="binding site" evidence="1">
    <location>
        <position position="61"/>
    </location>
    <ligand>
        <name>substrate</name>
    </ligand>
</feature>
<feature type="binding site" evidence="1">
    <location>
        <position position="83"/>
    </location>
    <ligand>
        <name>substrate</name>
    </ligand>
</feature>
<feature type="binding site" evidence="1">
    <location>
        <position position="121"/>
    </location>
    <ligand>
        <name>ATP</name>
        <dbReference type="ChEBI" id="CHEBI:30616"/>
    </ligand>
</feature>
<feature type="binding site" evidence="1">
    <location>
        <position position="146"/>
    </location>
    <ligand>
        <name>substrate</name>
    </ligand>
</feature>
<keyword id="KW-0028">Amino-acid biosynthesis</keyword>
<keyword id="KW-0057">Aromatic amino acid biosynthesis</keyword>
<keyword id="KW-0067">ATP-binding</keyword>
<keyword id="KW-0963">Cytoplasm</keyword>
<keyword id="KW-0418">Kinase</keyword>
<keyword id="KW-0460">Magnesium</keyword>
<keyword id="KW-0479">Metal-binding</keyword>
<keyword id="KW-0547">Nucleotide-binding</keyword>
<keyword id="KW-1185">Reference proteome</keyword>
<keyword id="KW-0808">Transferase</keyword>
<proteinExistence type="inferred from homology"/>
<organism>
    <name type="scientific">Blochmanniella floridana</name>
    <dbReference type="NCBI Taxonomy" id="203907"/>
    <lineage>
        <taxon>Bacteria</taxon>
        <taxon>Pseudomonadati</taxon>
        <taxon>Pseudomonadota</taxon>
        <taxon>Gammaproteobacteria</taxon>
        <taxon>Enterobacterales</taxon>
        <taxon>Enterobacteriaceae</taxon>
        <taxon>ant endosymbionts</taxon>
        <taxon>Candidatus Blochmanniella</taxon>
    </lineage>
</organism>
<gene>
    <name evidence="1" type="primary">aroK</name>
    <name type="ordered locus">Bfl572</name>
</gene>
<comment type="function">
    <text evidence="1">Catalyzes the specific phosphorylation of the 3-hydroxyl group of shikimic acid using ATP as a cosubstrate.</text>
</comment>
<comment type="catalytic activity">
    <reaction evidence="1">
        <text>shikimate + ATP = 3-phosphoshikimate + ADP + H(+)</text>
        <dbReference type="Rhea" id="RHEA:13121"/>
        <dbReference type="ChEBI" id="CHEBI:15378"/>
        <dbReference type="ChEBI" id="CHEBI:30616"/>
        <dbReference type="ChEBI" id="CHEBI:36208"/>
        <dbReference type="ChEBI" id="CHEBI:145989"/>
        <dbReference type="ChEBI" id="CHEBI:456216"/>
        <dbReference type="EC" id="2.7.1.71"/>
    </reaction>
</comment>
<comment type="cofactor">
    <cofactor evidence="1">
        <name>Mg(2+)</name>
        <dbReference type="ChEBI" id="CHEBI:18420"/>
    </cofactor>
    <text evidence="1">Binds 1 Mg(2+) ion per subunit.</text>
</comment>
<comment type="pathway">
    <text evidence="1">Metabolic intermediate biosynthesis; chorismate biosynthesis; chorismate from D-erythrose 4-phosphate and phosphoenolpyruvate: step 5/7.</text>
</comment>
<comment type="subunit">
    <text evidence="1">Monomer.</text>
</comment>
<comment type="subcellular location">
    <subcellularLocation>
        <location evidence="1">Cytoplasm</location>
    </subcellularLocation>
</comment>
<comment type="similarity">
    <text evidence="1">Belongs to the shikimate kinase family.</text>
</comment>
<name>AROK_BLOFL</name>
<dbReference type="EC" id="2.7.1.71" evidence="1"/>
<dbReference type="EMBL" id="BX248583">
    <property type="protein sequence ID" value="CAD83254.1"/>
    <property type="molecule type" value="Genomic_DNA"/>
</dbReference>
<dbReference type="SMR" id="Q7VRN2"/>
<dbReference type="STRING" id="203907.Bfl572"/>
<dbReference type="KEGG" id="bfl:Bfl572"/>
<dbReference type="eggNOG" id="COG0703">
    <property type="taxonomic scope" value="Bacteria"/>
</dbReference>
<dbReference type="HOGENOM" id="CLU_057607_2_2_6"/>
<dbReference type="OrthoDB" id="9800332at2"/>
<dbReference type="UniPathway" id="UPA00053">
    <property type="reaction ID" value="UER00088"/>
</dbReference>
<dbReference type="Proteomes" id="UP000002192">
    <property type="component" value="Chromosome"/>
</dbReference>
<dbReference type="GO" id="GO:0005829">
    <property type="term" value="C:cytosol"/>
    <property type="evidence" value="ECO:0007669"/>
    <property type="project" value="TreeGrafter"/>
</dbReference>
<dbReference type="GO" id="GO:0005524">
    <property type="term" value="F:ATP binding"/>
    <property type="evidence" value="ECO:0007669"/>
    <property type="project" value="UniProtKB-UniRule"/>
</dbReference>
<dbReference type="GO" id="GO:0000287">
    <property type="term" value="F:magnesium ion binding"/>
    <property type="evidence" value="ECO:0007669"/>
    <property type="project" value="UniProtKB-UniRule"/>
</dbReference>
<dbReference type="GO" id="GO:0004765">
    <property type="term" value="F:shikimate kinase activity"/>
    <property type="evidence" value="ECO:0007669"/>
    <property type="project" value="UniProtKB-UniRule"/>
</dbReference>
<dbReference type="GO" id="GO:0008652">
    <property type="term" value="P:amino acid biosynthetic process"/>
    <property type="evidence" value="ECO:0007669"/>
    <property type="project" value="UniProtKB-KW"/>
</dbReference>
<dbReference type="GO" id="GO:0009073">
    <property type="term" value="P:aromatic amino acid family biosynthetic process"/>
    <property type="evidence" value="ECO:0007669"/>
    <property type="project" value="UniProtKB-KW"/>
</dbReference>
<dbReference type="GO" id="GO:0009423">
    <property type="term" value="P:chorismate biosynthetic process"/>
    <property type="evidence" value="ECO:0007669"/>
    <property type="project" value="UniProtKB-UniRule"/>
</dbReference>
<dbReference type="CDD" id="cd00464">
    <property type="entry name" value="SK"/>
    <property type="match status" value="1"/>
</dbReference>
<dbReference type="FunFam" id="3.40.50.300:FF:000099">
    <property type="entry name" value="Shikimate kinase 1"/>
    <property type="match status" value="1"/>
</dbReference>
<dbReference type="Gene3D" id="3.40.50.300">
    <property type="entry name" value="P-loop containing nucleotide triphosphate hydrolases"/>
    <property type="match status" value="1"/>
</dbReference>
<dbReference type="HAMAP" id="MF_00109">
    <property type="entry name" value="Shikimate_kinase"/>
    <property type="match status" value="1"/>
</dbReference>
<dbReference type="InterPro" id="IPR027417">
    <property type="entry name" value="P-loop_NTPase"/>
</dbReference>
<dbReference type="InterPro" id="IPR031322">
    <property type="entry name" value="Shikimate/glucono_kinase"/>
</dbReference>
<dbReference type="InterPro" id="IPR000623">
    <property type="entry name" value="Shikimate_kinase/TSH1"/>
</dbReference>
<dbReference type="InterPro" id="IPR023000">
    <property type="entry name" value="Shikimate_kinase_CS"/>
</dbReference>
<dbReference type="NCBIfam" id="NF003456">
    <property type="entry name" value="PRK05057.1"/>
    <property type="match status" value="1"/>
</dbReference>
<dbReference type="PANTHER" id="PTHR21087">
    <property type="entry name" value="SHIKIMATE KINASE"/>
    <property type="match status" value="1"/>
</dbReference>
<dbReference type="PANTHER" id="PTHR21087:SF16">
    <property type="entry name" value="SHIKIMATE KINASE 1, CHLOROPLASTIC"/>
    <property type="match status" value="1"/>
</dbReference>
<dbReference type="Pfam" id="PF01202">
    <property type="entry name" value="SKI"/>
    <property type="match status" value="1"/>
</dbReference>
<dbReference type="PRINTS" id="PR01100">
    <property type="entry name" value="SHIKIMTKNASE"/>
</dbReference>
<dbReference type="SUPFAM" id="SSF52540">
    <property type="entry name" value="P-loop containing nucleoside triphosphate hydrolases"/>
    <property type="match status" value="1"/>
</dbReference>
<dbReference type="PROSITE" id="PS01128">
    <property type="entry name" value="SHIKIMATE_KINASE"/>
    <property type="match status" value="1"/>
</dbReference>
<reference key="1">
    <citation type="journal article" date="2003" name="Proc. Natl. Acad. Sci. U.S.A.">
        <title>The genome sequence of Blochmannia floridanus: comparative analysis of reduced genomes.</title>
        <authorList>
            <person name="Gil R."/>
            <person name="Silva F.J."/>
            <person name="Zientz E."/>
            <person name="Delmotte F."/>
            <person name="Gonzalez-Candelas F."/>
            <person name="Latorre A."/>
            <person name="Rausell C."/>
            <person name="Kamerbeek J."/>
            <person name="Gadau J."/>
            <person name="Hoelldobler B."/>
            <person name="van Ham R.C.H.J."/>
            <person name="Gross R."/>
            <person name="Moya A."/>
        </authorList>
    </citation>
    <scope>NUCLEOTIDE SEQUENCE [LARGE SCALE GENOMIC DNA]</scope>
</reference>
<sequence>MLTDNRKIFLIGPMGAGKSTIGRQLAQRLNLEFFDSDREIETCTGVNISWVFDVEGEVGFRNREEKIIDELTQKKSIVLATGGGSIKSHIARDHLAKRGLVIYLKTTIDKQLVRTKRDKRRPLLKSSTLFNYQNLRELLEDLAKERNPLYEEISDITVSTDEYSVKCVVNKILVLLKKNGAIYKD</sequence>
<protein>
    <recommendedName>
        <fullName evidence="1">Shikimate kinase</fullName>
        <shortName evidence="1">SK</shortName>
        <ecNumber evidence="1">2.7.1.71</ecNumber>
    </recommendedName>
</protein>
<accession>Q7VRN2</accession>